<organism>
    <name type="scientific">Clostridium kluyveri (strain ATCC 8527 / DSM 555 / NBRC 12016 / NCIMB 10680 / K1)</name>
    <dbReference type="NCBI Taxonomy" id="431943"/>
    <lineage>
        <taxon>Bacteria</taxon>
        <taxon>Bacillati</taxon>
        <taxon>Bacillota</taxon>
        <taxon>Clostridia</taxon>
        <taxon>Eubacteriales</taxon>
        <taxon>Clostridiaceae</taxon>
        <taxon>Clostridium</taxon>
    </lineage>
</organism>
<evidence type="ECO:0000250" key="1">
    <source>
        <dbReference type="UniProtKB" id="B3EY95"/>
    </source>
</evidence>
<evidence type="ECO:0000269" key="2">
    <source>
    </source>
</evidence>
<evidence type="ECO:0000303" key="3">
    <source>
    </source>
</evidence>
<evidence type="ECO:0000305" key="4"/>
<evidence type="ECO:0000305" key="5">
    <source>
    </source>
</evidence>
<name>CAT1_CLOK5</name>
<sequence>MSKGIKNSQLKKKNVKASNVAEKIEEKVEKTDKVVEKAAEVTEKRIRNLKLQEKVVTADVAADMIENGMIVAISGFTPSGYPKEVPKALTKKVNALEEEFKVTLYTGSSTGADIDGEWAKAGIIERRIPYQTNSDMRKKINDGSIKYADMHLSHMAQYINYSVIPKVDIAIIEAVAITEEGDIIPSTGIGNTATFVENADKVIVEINEAQPLELEGMADIYTLKNPPRREPIPIVNAGNRIGTTYVTCGSEKICAIVMTNTQDKTRPLTEVSPVSQAISDNLIGFLNKEVEEGKLPKNLLPIQSGVGSVANAVLAGLCESNFKNLSCYTEVIQDSMLKLIKCGKADVVSGTSISPSPEMLPEFIKDINFFREKIVLRPQEISNNPEIARRIGVISINTALEVDIYGNVNSTHVMGSKMMNGIGGSGDFARNAYLTIFTTESIAKKGDISSIVPMVSHVDHTEHDVMVIVTEQGVADLRGLSPREKAVAIIENCVHPDYKDMLMEYFEEACKSSGGNTPHNLEKALSWHTKFIKTGSMK</sequence>
<keyword id="KW-1185">Reference proteome</keyword>
<keyword id="KW-0808">Transferase</keyword>
<accession>P38946</accession>
<accession>A5N1M8</accession>
<comment type="function">
    <text evidence="2">Forms succinyl-CoA from succinate and acetyl-CoA.</text>
</comment>
<comment type="catalytic activity">
    <reaction evidence="2">
        <text>succinyl-CoA + acetate = succinate + acetyl-CoA</text>
        <dbReference type="Rhea" id="RHEA:35711"/>
        <dbReference type="ChEBI" id="CHEBI:30031"/>
        <dbReference type="ChEBI" id="CHEBI:30089"/>
        <dbReference type="ChEBI" id="CHEBI:57288"/>
        <dbReference type="ChEBI" id="CHEBI:57292"/>
        <dbReference type="EC" id="2.8.3.18"/>
    </reaction>
    <physiologicalReaction direction="right-to-left" evidence="5">
        <dbReference type="Rhea" id="RHEA:35713"/>
    </physiologicalReaction>
</comment>
<comment type="induction">
    <text evidence="2">Efficiently transcribed only during growth on ethanol plus succinate.</text>
</comment>
<comment type="similarity">
    <text evidence="4">Belongs to the acetyl-CoA hydrolase/transferase family.</text>
</comment>
<proteinExistence type="evidence at protein level"/>
<feature type="chain" id="PRO_0000215525" description="Succinyl-CoA:acetate CoA-transferase">
    <location>
        <begin position="1"/>
        <end position="538"/>
    </location>
</feature>
<feature type="active site" description="5-glutamyl coenzyme A thioester intermediate" evidence="1">
    <location>
        <position position="330"/>
    </location>
</feature>
<feature type="binding site" evidence="1">
    <location>
        <begin position="305"/>
        <end position="309"/>
    </location>
    <ligand>
        <name>CoA</name>
        <dbReference type="ChEBI" id="CHEBI:57287"/>
    </ligand>
</feature>
<feature type="binding site" evidence="1">
    <location>
        <position position="420"/>
    </location>
    <ligand>
        <name>CoA</name>
        <dbReference type="ChEBI" id="CHEBI:57287"/>
    </ligand>
</feature>
<feature type="binding site" evidence="1">
    <location>
        <position position="424"/>
    </location>
    <ligand>
        <name>CoA</name>
        <dbReference type="ChEBI" id="CHEBI:57287"/>
    </ligand>
</feature>
<reference key="1">
    <citation type="journal article" date="1996" name="J. Bacteriol.">
        <title>Molecular analysis of the anaerobic succinate degradation pathway in Clostridium kluyveri.</title>
        <authorList>
            <person name="Soehling B."/>
            <person name="Gottschalk G."/>
        </authorList>
    </citation>
    <scope>NUCLEOTIDE SEQUENCE [GENOMIC DNA]</scope>
    <scope>FUNCTION</scope>
    <scope>CATALYTIC ACTIVITY</scope>
    <scope>INDUCTION</scope>
</reference>
<reference key="2">
    <citation type="journal article" date="2008" name="Proc. Natl. Acad. Sci. U.S.A.">
        <title>The genome of Clostridium kluyveri, a strict anaerobe with unique metabolic features.</title>
        <authorList>
            <person name="Seedorf H."/>
            <person name="Fricke W.F."/>
            <person name="Veith B."/>
            <person name="Brueggemann H."/>
            <person name="Liesegang H."/>
            <person name="Strittmatter A."/>
            <person name="Miethke M."/>
            <person name="Buckel W."/>
            <person name="Hinderberger J."/>
            <person name="Li F."/>
            <person name="Hagemeier C."/>
            <person name="Thauer R.K."/>
            <person name="Gottschalk G."/>
        </authorList>
    </citation>
    <scope>NUCLEOTIDE SEQUENCE [LARGE SCALE GENOMIC DNA]</scope>
    <source>
        <strain>ATCC 8527 / DSM 555 / NBRC 12016 / NCIMB 10680 / K1</strain>
    </source>
</reference>
<protein>
    <recommendedName>
        <fullName evidence="4">Succinyl-CoA:acetate CoA-transferase</fullName>
        <ecNumber evidence="2">2.8.3.18</ecNumber>
    </recommendedName>
    <alternativeName>
        <fullName evidence="3">Succinyl-CoA:CoA transferase</fullName>
    </alternativeName>
</protein>
<dbReference type="EC" id="2.8.3.18" evidence="2"/>
<dbReference type="EMBL" id="L21902">
    <property type="protein sequence ID" value="AAA92346.1"/>
    <property type="molecule type" value="Genomic_DNA"/>
</dbReference>
<dbReference type="EMBL" id="CP000673">
    <property type="protein sequence ID" value="EDK35024.1"/>
    <property type="molecule type" value="Genomic_DNA"/>
</dbReference>
<dbReference type="RefSeq" id="WP_012103359.1">
    <property type="nucleotide sequence ID" value="NC_009706.1"/>
</dbReference>
<dbReference type="SMR" id="P38946"/>
<dbReference type="STRING" id="431943.CKL_3016"/>
<dbReference type="KEGG" id="ckl:CKL_3016"/>
<dbReference type="eggNOG" id="COG0427">
    <property type="taxonomic scope" value="Bacteria"/>
</dbReference>
<dbReference type="HOGENOM" id="CLU_019748_3_0_9"/>
<dbReference type="BioCyc" id="MetaCyc:MONOMER-13465"/>
<dbReference type="Proteomes" id="UP000002411">
    <property type="component" value="Chromosome"/>
</dbReference>
<dbReference type="GO" id="GO:0008775">
    <property type="term" value="F:acetate CoA-transferase activity"/>
    <property type="evidence" value="ECO:0007669"/>
    <property type="project" value="InterPro"/>
</dbReference>
<dbReference type="GO" id="GO:0003986">
    <property type="term" value="F:acetyl-CoA hydrolase activity"/>
    <property type="evidence" value="ECO:0007669"/>
    <property type="project" value="TreeGrafter"/>
</dbReference>
<dbReference type="GO" id="GO:0006083">
    <property type="term" value="P:acetate metabolic process"/>
    <property type="evidence" value="ECO:0007669"/>
    <property type="project" value="InterPro"/>
</dbReference>
<dbReference type="GO" id="GO:0006084">
    <property type="term" value="P:acetyl-CoA metabolic process"/>
    <property type="evidence" value="ECO:0007669"/>
    <property type="project" value="InterPro"/>
</dbReference>
<dbReference type="FunFam" id="3.40.1080.20:FF:000001">
    <property type="entry name" value="Acetyl-CoA hydrolase Ach1"/>
    <property type="match status" value="1"/>
</dbReference>
<dbReference type="Gene3D" id="3.30.750.70">
    <property type="entry name" value="4-hydroxybutyrate coenzyme like domains"/>
    <property type="match status" value="1"/>
</dbReference>
<dbReference type="Gene3D" id="3.40.1080.20">
    <property type="entry name" value="Acetyl-CoA hydrolase/transferase C-terminal domain"/>
    <property type="match status" value="1"/>
</dbReference>
<dbReference type="Gene3D" id="3.40.1080.10">
    <property type="entry name" value="Glutaconate Coenzyme A-transferase"/>
    <property type="match status" value="1"/>
</dbReference>
<dbReference type="InterPro" id="IPR026888">
    <property type="entry name" value="AcetylCoA_hyd_C"/>
</dbReference>
<dbReference type="InterPro" id="IPR038460">
    <property type="entry name" value="AcetylCoA_hyd_C_sf"/>
</dbReference>
<dbReference type="InterPro" id="IPR046433">
    <property type="entry name" value="ActCoA_hydro"/>
</dbReference>
<dbReference type="InterPro" id="IPR003702">
    <property type="entry name" value="ActCoA_hydro_N"/>
</dbReference>
<dbReference type="InterPro" id="IPR037171">
    <property type="entry name" value="NagB/RpiA_transferase-like"/>
</dbReference>
<dbReference type="InterPro" id="IPR017821">
    <property type="entry name" value="Succinate_CoA_transferase"/>
</dbReference>
<dbReference type="NCBIfam" id="TIGR03458">
    <property type="entry name" value="YgfH_subfam"/>
    <property type="match status" value="1"/>
</dbReference>
<dbReference type="PANTHER" id="PTHR43609">
    <property type="entry name" value="ACETYL-COA HYDROLASE"/>
    <property type="match status" value="1"/>
</dbReference>
<dbReference type="PANTHER" id="PTHR43609:SF1">
    <property type="entry name" value="ACETYL-COA HYDROLASE"/>
    <property type="match status" value="1"/>
</dbReference>
<dbReference type="Pfam" id="PF13336">
    <property type="entry name" value="AcetylCoA_hyd_C"/>
    <property type="match status" value="1"/>
</dbReference>
<dbReference type="Pfam" id="PF02550">
    <property type="entry name" value="AcetylCoA_hydro"/>
    <property type="match status" value="1"/>
</dbReference>
<dbReference type="SUPFAM" id="SSF100950">
    <property type="entry name" value="NagB/RpiA/CoA transferase-like"/>
    <property type="match status" value="2"/>
</dbReference>
<gene>
    <name evidence="3" type="primary">cat1</name>
    <name type="ordered locus">CKL_3016</name>
</gene>